<dbReference type="EMBL" id="AP005387">
    <property type="protein sequence ID" value="BAD54410.1"/>
    <property type="molecule type" value="Genomic_DNA"/>
</dbReference>
<dbReference type="EMBL" id="AP008212">
    <property type="protein sequence ID" value="BAF19271.1"/>
    <property type="molecule type" value="Genomic_DNA"/>
</dbReference>
<dbReference type="EMBL" id="AP014962">
    <property type="status" value="NOT_ANNOTATED_CDS"/>
    <property type="molecule type" value="Genomic_DNA"/>
</dbReference>
<dbReference type="RefSeq" id="XP_015640997.1">
    <property type="nucleotide sequence ID" value="XM_015785511.1"/>
</dbReference>
<dbReference type="FunCoup" id="Q5Z6K9">
    <property type="interactions" value="26"/>
</dbReference>
<dbReference type="STRING" id="39947.Q5Z6K9"/>
<dbReference type="PaxDb" id="39947-Q5Z6K9"/>
<dbReference type="EnsemblPlants" id="Os06t0270200-01">
    <property type="protein sequence ID" value="Os06t0270200-01"/>
    <property type="gene ID" value="Os06g0270200"/>
</dbReference>
<dbReference type="Gramene" id="Os06t0270200-01">
    <property type="protein sequence ID" value="Os06t0270200-01"/>
    <property type="gene ID" value="Os06g0270200"/>
</dbReference>
<dbReference type="KEGG" id="dosa:Os06g0270200"/>
<dbReference type="eggNOG" id="ENOG502QPSA">
    <property type="taxonomic scope" value="Eukaryota"/>
</dbReference>
<dbReference type="HOGENOM" id="CLU_008142_2_0_1"/>
<dbReference type="InParanoid" id="Q5Z6K9"/>
<dbReference type="OrthoDB" id="504708at2759"/>
<dbReference type="Proteomes" id="UP000000763">
    <property type="component" value="Chromosome 6"/>
</dbReference>
<dbReference type="Proteomes" id="UP000059680">
    <property type="component" value="Chromosome 6"/>
</dbReference>
<dbReference type="GO" id="GO:0016020">
    <property type="term" value="C:membrane"/>
    <property type="evidence" value="ECO:0000318"/>
    <property type="project" value="GO_Central"/>
</dbReference>
<dbReference type="GO" id="GO:0015079">
    <property type="term" value="F:potassium ion transmembrane transporter activity"/>
    <property type="evidence" value="ECO:0000318"/>
    <property type="project" value="GO_Central"/>
</dbReference>
<dbReference type="GO" id="GO:0006813">
    <property type="term" value="P:potassium ion transport"/>
    <property type="evidence" value="ECO:0000318"/>
    <property type="project" value="GO_Central"/>
</dbReference>
<dbReference type="InterPro" id="IPR003855">
    <property type="entry name" value="K+_transporter"/>
</dbReference>
<dbReference type="InterPro" id="IPR053952">
    <property type="entry name" value="K_trans_C"/>
</dbReference>
<dbReference type="InterPro" id="IPR053951">
    <property type="entry name" value="K_trans_N"/>
</dbReference>
<dbReference type="NCBIfam" id="TIGR00794">
    <property type="entry name" value="kup"/>
    <property type="match status" value="1"/>
</dbReference>
<dbReference type="PANTHER" id="PTHR30540">
    <property type="entry name" value="OSMOTIC STRESS POTASSIUM TRANSPORTER"/>
    <property type="match status" value="1"/>
</dbReference>
<dbReference type="PANTHER" id="PTHR30540:SF17">
    <property type="entry name" value="POTASSIUM TRANSPORTER 24"/>
    <property type="match status" value="1"/>
</dbReference>
<dbReference type="Pfam" id="PF02705">
    <property type="entry name" value="K_trans"/>
    <property type="match status" value="1"/>
</dbReference>
<dbReference type="Pfam" id="PF22776">
    <property type="entry name" value="K_trans_C"/>
    <property type="match status" value="1"/>
</dbReference>
<evidence type="ECO:0000250" key="1"/>
<evidence type="ECO:0000255" key="2"/>
<evidence type="ECO:0000256" key="3">
    <source>
        <dbReference type="SAM" id="MobiDB-lite"/>
    </source>
</evidence>
<evidence type="ECO:0000305" key="4"/>
<proteinExistence type="inferred from homology"/>
<sequence>MDVEGGGAAARRKGGWWWWREEAVLAYQSLGVVYGEVAAAPLYVYRSAFAGGDIEHSAGNEEIYGALSLVFWTLTLVPLAKYVLLVLRADDAGEGGTFALYSLICRRVRAGLLPPCAAAAAGEELDAAGAAAAPVSAVRAALERHRVLQRLLLLLALLGTCMVIGDGVLTPAVSVFSAVSGLELSMDKDQHKYILLPITCVILVCLFALQHYGTHRVGFLFAPIVCLWLLCISIIGVYNIIHWNPHVYQALSPYYMYKFLRKTQTGGWMSLGGILLCVTGSEAMYADLGHFTQNSIKMAFTLLVYPALVLAYMGQAAYISRHHNFEDGSHIGFYVSVPEKIRWPVLGIAILASVVGSQAIITGTFSIIKQCSSLNCFPRVKIVHTSSTVHGQIYIPEINWILMILCLSVTIGFRDTKHLTNAQGLAVITVMLVTTCLMSLVILLCWNKSIVYALSFLLFFGAIEVIYFAASLVKFHEGAWVPVTLSFIFMMVMCVWHYGTKKKYEFDVQNKVSISWLLNIGPSLGIVRVRGIGLIHTELMSGIPAIFSHFVTNLPAFHQVLVFLCIKSVSVPHVQPEERFLVGRIGPKKYRIYRVIVRYGYRDVQKDDVEFEKDLVSSIAEFIRCADSNQNSFMDGASHSCEGLSFISKGLPLEEEEGEFDGSDSTGSSAHKEINPNTTAPKPKRVRFALPKDTKIDREVRGELQELMEAREAGMSFITGRSHMKAKSGSGLIKQIVINFGYEFLRRNSRGPAFAVNLPHVSTVEVGMICLV</sequence>
<comment type="function">
    <text evidence="1">High-affinity potassium transporter.</text>
</comment>
<comment type="subcellular location">
    <subcellularLocation>
        <location evidence="4">Membrane</location>
        <topology evidence="4">Multi-pass membrane protein</topology>
    </subcellularLocation>
</comment>
<comment type="similarity">
    <text evidence="4">Belongs to the HAK/KUP transporter (TC 2.A.72.3) family.</text>
</comment>
<protein>
    <recommendedName>
        <fullName>Potassium transporter 24</fullName>
    </recommendedName>
    <alternativeName>
        <fullName>OsHAK24</fullName>
    </alternativeName>
</protein>
<reference key="1">
    <citation type="journal article" date="2005" name="Nature">
        <title>The map-based sequence of the rice genome.</title>
        <authorList>
            <consortium name="International rice genome sequencing project (IRGSP)"/>
        </authorList>
    </citation>
    <scope>NUCLEOTIDE SEQUENCE [LARGE SCALE GENOMIC DNA]</scope>
    <source>
        <strain>cv. Nipponbare</strain>
    </source>
</reference>
<reference key="2">
    <citation type="journal article" date="2008" name="Nucleic Acids Res.">
        <title>The rice annotation project database (RAP-DB): 2008 update.</title>
        <authorList>
            <consortium name="The rice annotation project (RAP)"/>
        </authorList>
    </citation>
    <scope>GENOME REANNOTATION</scope>
    <source>
        <strain>cv. Nipponbare</strain>
    </source>
</reference>
<reference key="3">
    <citation type="journal article" date="2013" name="Rice">
        <title>Improvement of the Oryza sativa Nipponbare reference genome using next generation sequence and optical map data.</title>
        <authorList>
            <person name="Kawahara Y."/>
            <person name="de la Bastide M."/>
            <person name="Hamilton J.P."/>
            <person name="Kanamori H."/>
            <person name="McCombie W.R."/>
            <person name="Ouyang S."/>
            <person name="Schwartz D.C."/>
            <person name="Tanaka T."/>
            <person name="Wu J."/>
            <person name="Zhou S."/>
            <person name="Childs K.L."/>
            <person name="Davidson R.M."/>
            <person name="Lin H."/>
            <person name="Quesada-Ocampo L."/>
            <person name="Vaillancourt B."/>
            <person name="Sakai H."/>
            <person name="Lee S.S."/>
            <person name="Kim J."/>
            <person name="Numa H."/>
            <person name="Itoh T."/>
            <person name="Buell C.R."/>
            <person name="Matsumoto T."/>
        </authorList>
    </citation>
    <scope>GENOME REANNOTATION</scope>
    <source>
        <strain>cv. Nipponbare</strain>
    </source>
</reference>
<reference key="4">
    <citation type="journal article" date="2009" name="J. Genet. Genomics">
        <title>Molecular evolution and functional divergence of HAK potassium transporter gene family in rice (Oryza sativa L.).</title>
        <authorList>
            <person name="Yang Z."/>
            <person name="Gao Q."/>
            <person name="Sun C."/>
            <person name="Li W."/>
            <person name="Gu S."/>
            <person name="Xu C."/>
        </authorList>
    </citation>
    <scope>GENE FAMILY</scope>
</reference>
<gene>
    <name type="primary">HAK24</name>
    <name type="ordered locus">Os06g0270200</name>
    <name type="ordered locus">LOC_Os06g15910</name>
    <name type="ORF">OSJNBa0084K06.26</name>
</gene>
<keyword id="KW-0406">Ion transport</keyword>
<keyword id="KW-0472">Membrane</keyword>
<keyword id="KW-0630">Potassium</keyword>
<keyword id="KW-0633">Potassium transport</keyword>
<keyword id="KW-1185">Reference proteome</keyword>
<keyword id="KW-0812">Transmembrane</keyword>
<keyword id="KW-1133">Transmembrane helix</keyword>
<keyword id="KW-0813">Transport</keyword>
<name>HAK24_ORYSJ</name>
<feature type="chain" id="PRO_0000379539" description="Potassium transporter 24">
    <location>
        <begin position="1"/>
        <end position="772"/>
    </location>
</feature>
<feature type="topological domain" description="Cytoplasmic" evidence="2">
    <location>
        <begin position="1"/>
        <end position="23"/>
    </location>
</feature>
<feature type="transmembrane region" description="Helical; Name=1" evidence="2">
    <location>
        <begin position="24"/>
        <end position="44"/>
    </location>
</feature>
<feature type="topological domain" description="Extracellular" evidence="2">
    <location>
        <begin position="45"/>
        <end position="66"/>
    </location>
</feature>
<feature type="transmembrane region" description="Helical; Name=2" evidence="2">
    <location>
        <begin position="67"/>
        <end position="87"/>
    </location>
</feature>
<feature type="topological domain" description="Cytoplasmic" evidence="2">
    <location>
        <begin position="88"/>
        <end position="150"/>
    </location>
</feature>
<feature type="transmembrane region" description="Helical; Name=3" evidence="2">
    <location>
        <begin position="151"/>
        <end position="171"/>
    </location>
</feature>
<feature type="topological domain" description="Extracellular" evidence="2">
    <location>
        <begin position="172"/>
        <end position="192"/>
    </location>
</feature>
<feature type="transmembrane region" description="Helical; Name=4" evidence="2">
    <location>
        <begin position="193"/>
        <end position="213"/>
    </location>
</feature>
<feature type="topological domain" description="Cytoplasmic" evidence="2">
    <location>
        <begin position="214"/>
        <end position="216"/>
    </location>
</feature>
<feature type="transmembrane region" description="Helical; Name=5" evidence="2">
    <location>
        <begin position="217"/>
        <end position="237"/>
    </location>
</feature>
<feature type="topological domain" description="Extracellular" evidence="2">
    <location>
        <begin position="238"/>
        <end position="265"/>
    </location>
</feature>
<feature type="transmembrane region" description="Helical; Name=6" evidence="2">
    <location>
        <begin position="266"/>
        <end position="286"/>
    </location>
</feature>
<feature type="topological domain" description="Cytoplasmic" evidence="2">
    <location>
        <begin position="287"/>
        <end position="298"/>
    </location>
</feature>
<feature type="transmembrane region" description="Helical; Name=7" evidence="2">
    <location>
        <begin position="299"/>
        <end position="319"/>
    </location>
</feature>
<feature type="topological domain" description="Extracellular" evidence="2">
    <location>
        <begin position="320"/>
        <end position="344"/>
    </location>
</feature>
<feature type="transmembrane region" description="Helical; Name=8" evidence="2">
    <location>
        <begin position="345"/>
        <end position="365"/>
    </location>
</feature>
<feature type="topological domain" description="Cytoplasmic" evidence="2">
    <location>
        <begin position="366"/>
        <end position="392"/>
    </location>
</feature>
<feature type="transmembrane region" description="Helical; Name=9" evidence="2">
    <location>
        <begin position="393"/>
        <end position="413"/>
    </location>
</feature>
<feature type="topological domain" description="Extracellular" evidence="2">
    <location>
        <begin position="414"/>
        <end position="423"/>
    </location>
</feature>
<feature type="transmembrane region" description="Helical; Name=10" evidence="2">
    <location>
        <begin position="424"/>
        <end position="444"/>
    </location>
</feature>
<feature type="topological domain" description="Cytoplasmic" evidence="2">
    <location>
        <begin position="445"/>
        <end position="449"/>
    </location>
</feature>
<feature type="transmembrane region" description="Helical; Name=11" evidence="2">
    <location>
        <begin position="450"/>
        <end position="470"/>
    </location>
</feature>
<feature type="topological domain" description="Extracellular" evidence="2">
    <location>
        <begin position="471"/>
        <end position="477"/>
    </location>
</feature>
<feature type="transmembrane region" description="Helical; Name=12" evidence="2">
    <location>
        <begin position="478"/>
        <end position="498"/>
    </location>
</feature>
<feature type="topological domain" description="Cytoplasmic" evidence="2">
    <location>
        <begin position="499"/>
        <end position="772"/>
    </location>
</feature>
<feature type="region of interest" description="Disordered" evidence="3">
    <location>
        <begin position="656"/>
        <end position="684"/>
    </location>
</feature>
<accession>Q5Z6K9</accession>
<organism>
    <name type="scientific">Oryza sativa subsp. japonica</name>
    <name type="common">Rice</name>
    <dbReference type="NCBI Taxonomy" id="39947"/>
    <lineage>
        <taxon>Eukaryota</taxon>
        <taxon>Viridiplantae</taxon>
        <taxon>Streptophyta</taxon>
        <taxon>Embryophyta</taxon>
        <taxon>Tracheophyta</taxon>
        <taxon>Spermatophyta</taxon>
        <taxon>Magnoliopsida</taxon>
        <taxon>Liliopsida</taxon>
        <taxon>Poales</taxon>
        <taxon>Poaceae</taxon>
        <taxon>BOP clade</taxon>
        <taxon>Oryzoideae</taxon>
        <taxon>Oryzeae</taxon>
        <taxon>Oryzinae</taxon>
        <taxon>Oryza</taxon>
        <taxon>Oryza sativa</taxon>
    </lineage>
</organism>